<proteinExistence type="inferred from homology"/>
<dbReference type="EC" id="1.14.-.-" evidence="2"/>
<dbReference type="EMBL" id="CU928161">
    <property type="protein sequence ID" value="CAR02396.1"/>
    <property type="molecule type" value="Genomic_DNA"/>
</dbReference>
<dbReference type="RefSeq" id="WP_001331937.1">
    <property type="nucleotide sequence ID" value="NC_011742.1"/>
</dbReference>
<dbReference type="SMR" id="B7MIJ6"/>
<dbReference type="KEGG" id="ecz:ECS88_1069"/>
<dbReference type="HOGENOM" id="CLU_038878_1_1_6"/>
<dbReference type="Proteomes" id="UP000000747">
    <property type="component" value="Chromosome"/>
</dbReference>
<dbReference type="GO" id="GO:0016705">
    <property type="term" value="F:oxidoreductase activity, acting on paired donors, with incorporation or reduction of molecular oxygen"/>
    <property type="evidence" value="ECO:0007669"/>
    <property type="project" value="UniProtKB-UniRule"/>
</dbReference>
<dbReference type="GO" id="GO:0006400">
    <property type="term" value="P:tRNA modification"/>
    <property type="evidence" value="ECO:0007669"/>
    <property type="project" value="UniProtKB-UniRule"/>
</dbReference>
<dbReference type="CDD" id="cd01518">
    <property type="entry name" value="RHOD_YceA"/>
    <property type="match status" value="1"/>
</dbReference>
<dbReference type="Gene3D" id="3.30.70.100">
    <property type="match status" value="1"/>
</dbReference>
<dbReference type="Gene3D" id="3.40.250.10">
    <property type="entry name" value="Rhodanese-like domain"/>
    <property type="match status" value="1"/>
</dbReference>
<dbReference type="HAMAP" id="MF_00469">
    <property type="entry name" value="TrhO"/>
    <property type="match status" value="1"/>
</dbReference>
<dbReference type="InterPro" id="IPR001763">
    <property type="entry name" value="Rhodanese-like_dom"/>
</dbReference>
<dbReference type="InterPro" id="IPR036873">
    <property type="entry name" value="Rhodanese-like_dom_sf"/>
</dbReference>
<dbReference type="InterPro" id="IPR022111">
    <property type="entry name" value="Rhodanese_C"/>
</dbReference>
<dbReference type="InterPro" id="IPR020936">
    <property type="entry name" value="TrhO"/>
</dbReference>
<dbReference type="InterPro" id="IPR040503">
    <property type="entry name" value="TRHO_N"/>
</dbReference>
<dbReference type="NCBIfam" id="NF001133">
    <property type="entry name" value="PRK00142.1-1"/>
    <property type="match status" value="1"/>
</dbReference>
<dbReference type="PANTHER" id="PTHR43846:SF1">
    <property type="entry name" value="TRNA URIDINE(34) HYDROXYLASE"/>
    <property type="match status" value="1"/>
</dbReference>
<dbReference type="PANTHER" id="PTHR43846">
    <property type="entry name" value="UPF0176 PROTEIN YCEA"/>
    <property type="match status" value="1"/>
</dbReference>
<dbReference type="Pfam" id="PF00581">
    <property type="entry name" value="Rhodanese"/>
    <property type="match status" value="1"/>
</dbReference>
<dbReference type="Pfam" id="PF12368">
    <property type="entry name" value="Rhodanese_C"/>
    <property type="match status" value="1"/>
</dbReference>
<dbReference type="Pfam" id="PF17773">
    <property type="entry name" value="UPF0176_N"/>
    <property type="match status" value="1"/>
</dbReference>
<dbReference type="SMART" id="SM00450">
    <property type="entry name" value="RHOD"/>
    <property type="match status" value="1"/>
</dbReference>
<dbReference type="SUPFAM" id="SSF52821">
    <property type="entry name" value="Rhodanese/Cell cycle control phosphatase"/>
    <property type="match status" value="1"/>
</dbReference>
<dbReference type="PROSITE" id="PS50206">
    <property type="entry name" value="RHODANESE_3"/>
    <property type="match status" value="1"/>
</dbReference>
<keyword id="KW-0560">Oxidoreductase</keyword>
<keyword id="KW-1185">Reference proteome</keyword>
<keyword id="KW-0819">tRNA processing</keyword>
<accession>B7MIJ6</accession>
<comment type="function">
    <text evidence="1">Catalyzes oxygen-dependent 5-hydroxyuridine (ho5U) modification at position 34 in tRNAs, the first step in 5-carboxymethoxyuridine (cmo5U) biosynthesis. May be part of an alternate pathway, which is able to bypass cmo5U biogenesis in a subset of tRNAs under aerobic conditions.</text>
</comment>
<comment type="catalytic activity">
    <reaction evidence="2">
        <text>uridine(34) in tRNA + AH2 + O2 = 5-hydroxyuridine(34) in tRNA + A + H2O</text>
        <dbReference type="Rhea" id="RHEA:64224"/>
        <dbReference type="Rhea" id="RHEA-COMP:11727"/>
        <dbReference type="Rhea" id="RHEA-COMP:13381"/>
        <dbReference type="ChEBI" id="CHEBI:13193"/>
        <dbReference type="ChEBI" id="CHEBI:15377"/>
        <dbReference type="ChEBI" id="CHEBI:15379"/>
        <dbReference type="ChEBI" id="CHEBI:17499"/>
        <dbReference type="ChEBI" id="CHEBI:65315"/>
        <dbReference type="ChEBI" id="CHEBI:136877"/>
    </reaction>
</comment>
<comment type="similarity">
    <text evidence="2">Belongs to the TrhO family.</text>
</comment>
<feature type="chain" id="PRO_1000200358" description="tRNA uridine(34) hydroxylase">
    <location>
        <begin position="1"/>
        <end position="350"/>
    </location>
</feature>
<feature type="domain" description="Rhodanese" evidence="2">
    <location>
        <begin position="146"/>
        <end position="240"/>
    </location>
</feature>
<feature type="active site" description="Cysteine persulfide intermediate" evidence="2">
    <location>
        <position position="200"/>
    </location>
</feature>
<gene>
    <name evidence="2" type="primary">trhO</name>
    <name type="synonym">yceA</name>
    <name type="ordered locus">ECS88_1069</name>
</gene>
<protein>
    <recommendedName>
        <fullName evidence="2">tRNA uridine(34) hydroxylase</fullName>
        <ecNumber evidence="2">1.14.-.-</ecNumber>
    </recommendedName>
    <alternativeName>
        <fullName evidence="2">tRNA hydroxylation protein O</fullName>
    </alternativeName>
</protein>
<name>TRHO_ECO45</name>
<sequence>MPVLHNRISNDALKAKMLAESEPRTTISFYKYFHIADPKVTRDALYQLFTALNVFGRVYLAHEGINAQISVPASNVETFRAQLYAFDPALEGLRLNIALDDDGKSFWVLRMKVRDRIVADGIDDPHFDASNVGEYLQAAEVNAMLDDPDALFIDMRNHYEYEVGHFENALEIPADTFREQLPKAVEMMQAHKDKKIVMYCTGGIRCEKASAWMKHNGFNKVWHIEGGVIEYARKAREQGLPVRFIGKNFVFDERMGERISDEIIAHCHQCGAPCDSHTNCKNDGCHLLFIQCPVCAEKYKGCCSEICCEESALPPDEQRRRRAGRENGNKIFNKSRGRLNTTLGIPDPTE</sequence>
<organism>
    <name type="scientific">Escherichia coli O45:K1 (strain S88 / ExPEC)</name>
    <dbReference type="NCBI Taxonomy" id="585035"/>
    <lineage>
        <taxon>Bacteria</taxon>
        <taxon>Pseudomonadati</taxon>
        <taxon>Pseudomonadota</taxon>
        <taxon>Gammaproteobacteria</taxon>
        <taxon>Enterobacterales</taxon>
        <taxon>Enterobacteriaceae</taxon>
        <taxon>Escherichia</taxon>
    </lineage>
</organism>
<reference key="1">
    <citation type="journal article" date="2009" name="PLoS Genet.">
        <title>Organised genome dynamics in the Escherichia coli species results in highly diverse adaptive paths.</title>
        <authorList>
            <person name="Touchon M."/>
            <person name="Hoede C."/>
            <person name="Tenaillon O."/>
            <person name="Barbe V."/>
            <person name="Baeriswyl S."/>
            <person name="Bidet P."/>
            <person name="Bingen E."/>
            <person name="Bonacorsi S."/>
            <person name="Bouchier C."/>
            <person name="Bouvet O."/>
            <person name="Calteau A."/>
            <person name="Chiapello H."/>
            <person name="Clermont O."/>
            <person name="Cruveiller S."/>
            <person name="Danchin A."/>
            <person name="Diard M."/>
            <person name="Dossat C."/>
            <person name="Karoui M.E."/>
            <person name="Frapy E."/>
            <person name="Garry L."/>
            <person name="Ghigo J.M."/>
            <person name="Gilles A.M."/>
            <person name="Johnson J."/>
            <person name="Le Bouguenec C."/>
            <person name="Lescat M."/>
            <person name="Mangenot S."/>
            <person name="Martinez-Jehanne V."/>
            <person name="Matic I."/>
            <person name="Nassif X."/>
            <person name="Oztas S."/>
            <person name="Petit M.A."/>
            <person name="Pichon C."/>
            <person name="Rouy Z."/>
            <person name="Ruf C.S."/>
            <person name="Schneider D."/>
            <person name="Tourret J."/>
            <person name="Vacherie B."/>
            <person name="Vallenet D."/>
            <person name="Medigue C."/>
            <person name="Rocha E.P.C."/>
            <person name="Denamur E."/>
        </authorList>
    </citation>
    <scope>NUCLEOTIDE SEQUENCE [LARGE SCALE GENOMIC DNA]</scope>
    <source>
        <strain>S88 / ExPEC</strain>
    </source>
</reference>
<evidence type="ECO:0000250" key="1">
    <source>
        <dbReference type="UniProtKB" id="P24188"/>
    </source>
</evidence>
<evidence type="ECO:0000255" key="2">
    <source>
        <dbReference type="HAMAP-Rule" id="MF_00469"/>
    </source>
</evidence>